<feature type="chain" id="PRO_0000135002" description="Nicotinamide-nucleotide adenylyltransferase">
    <location>
        <begin position="1"/>
        <end position="188"/>
    </location>
</feature>
<protein>
    <recommendedName>
        <fullName evidence="1">Nicotinamide-nucleotide adenylyltransferase</fullName>
        <ecNumber evidence="1">2.7.7.1</ecNumber>
    </recommendedName>
    <alternativeName>
        <fullName evidence="1">NAD(+) diphosphorylase</fullName>
    </alternativeName>
    <alternativeName>
        <fullName evidence="1">NAD(+) pyrophosphorylase</fullName>
    </alternativeName>
    <alternativeName>
        <fullName evidence="1">NMN adenylyltransferase</fullName>
    </alternativeName>
</protein>
<reference key="1">
    <citation type="journal article" date="2005" name="Genome Res.">
        <title>Complete genome sequence of the hyperthermophilic archaeon Thermococcus kodakaraensis KOD1 and comparison with Pyrococcus genomes.</title>
        <authorList>
            <person name="Fukui T."/>
            <person name="Atomi H."/>
            <person name="Kanai T."/>
            <person name="Matsumi R."/>
            <person name="Fujiwara S."/>
            <person name="Imanaka T."/>
        </authorList>
    </citation>
    <scope>NUCLEOTIDE SEQUENCE [LARGE SCALE GENOMIC DNA]</scope>
    <source>
        <strain>ATCC BAA-918 / JCM 12380 / KOD1</strain>
    </source>
</reference>
<sequence length="188" mass="21699">MVKRGLFVGRFQPVHNGHIKALEFVFSQVDEVIIGIGSAQASHTLKNPFTTSERMEMLIRALEEAELTEKRYYLIPLPDINFNAIWATYVVSMVPRFDVVFTGNSLVAQLFREKGYEVIVQPMFRKDILSATEIRRRMVEGEPWEELVPRSVAEFIREIKGVERIKMLATNLESSEKELQAPIRIPEF</sequence>
<dbReference type="EC" id="2.7.7.1" evidence="1"/>
<dbReference type="EMBL" id="AP006878">
    <property type="protein sequence ID" value="BAD84256.1"/>
    <property type="molecule type" value="Genomic_DNA"/>
</dbReference>
<dbReference type="RefSeq" id="WP_011249022.1">
    <property type="nucleotide sequence ID" value="NC_006624.1"/>
</dbReference>
<dbReference type="SMR" id="Q5JEF8"/>
<dbReference type="FunCoup" id="Q5JEF8">
    <property type="interactions" value="9"/>
</dbReference>
<dbReference type="STRING" id="69014.TK0067"/>
<dbReference type="EnsemblBacteria" id="BAD84256">
    <property type="protein sequence ID" value="BAD84256"/>
    <property type="gene ID" value="TK0067"/>
</dbReference>
<dbReference type="GeneID" id="78446569"/>
<dbReference type="KEGG" id="tko:TK0067"/>
<dbReference type="PATRIC" id="fig|69014.16.peg.68"/>
<dbReference type="eggNOG" id="arCOG00972">
    <property type="taxonomic scope" value="Archaea"/>
</dbReference>
<dbReference type="HOGENOM" id="CLU_108783_0_0_2"/>
<dbReference type="InParanoid" id="Q5JEF8"/>
<dbReference type="OrthoDB" id="264480at2157"/>
<dbReference type="PhylomeDB" id="Q5JEF8"/>
<dbReference type="BRENDA" id="2.7.7.1">
    <property type="organism ID" value="5246"/>
</dbReference>
<dbReference type="UniPathway" id="UPA00253">
    <property type="reaction ID" value="UER00600"/>
</dbReference>
<dbReference type="Proteomes" id="UP000000536">
    <property type="component" value="Chromosome"/>
</dbReference>
<dbReference type="GO" id="GO:0005737">
    <property type="term" value="C:cytoplasm"/>
    <property type="evidence" value="ECO:0007669"/>
    <property type="project" value="UniProtKB-SubCell"/>
</dbReference>
<dbReference type="GO" id="GO:0005524">
    <property type="term" value="F:ATP binding"/>
    <property type="evidence" value="ECO:0007669"/>
    <property type="project" value="UniProtKB-KW"/>
</dbReference>
<dbReference type="GO" id="GO:0000309">
    <property type="term" value="F:nicotinamide-nucleotide adenylyltransferase activity"/>
    <property type="evidence" value="ECO:0007669"/>
    <property type="project" value="UniProtKB-UniRule"/>
</dbReference>
<dbReference type="GO" id="GO:0009435">
    <property type="term" value="P:NAD biosynthetic process"/>
    <property type="evidence" value="ECO:0007669"/>
    <property type="project" value="UniProtKB-UniRule"/>
</dbReference>
<dbReference type="CDD" id="cd02166">
    <property type="entry name" value="NMNAT_Archaea"/>
    <property type="match status" value="1"/>
</dbReference>
<dbReference type="Gene3D" id="3.40.50.620">
    <property type="entry name" value="HUPs"/>
    <property type="match status" value="1"/>
</dbReference>
<dbReference type="HAMAP" id="MF_00243">
    <property type="entry name" value="NMN_adenylyltr"/>
    <property type="match status" value="1"/>
</dbReference>
<dbReference type="InterPro" id="IPR004821">
    <property type="entry name" value="Cyt_trans-like"/>
</dbReference>
<dbReference type="InterPro" id="IPR006418">
    <property type="entry name" value="NMN_Atrans_arc"/>
</dbReference>
<dbReference type="InterPro" id="IPR014729">
    <property type="entry name" value="Rossmann-like_a/b/a_fold"/>
</dbReference>
<dbReference type="NCBIfam" id="TIGR01527">
    <property type="entry name" value="arch_NMN_Atrans"/>
    <property type="match status" value="1"/>
</dbReference>
<dbReference type="NCBIfam" id="TIGR00125">
    <property type="entry name" value="cyt_tran_rel"/>
    <property type="match status" value="1"/>
</dbReference>
<dbReference type="NCBIfam" id="NF002243">
    <property type="entry name" value="PRK01153.1"/>
    <property type="match status" value="1"/>
</dbReference>
<dbReference type="PANTHER" id="PTHR21342:SF0">
    <property type="entry name" value="BIFUNCTIONAL NMN ADENYLYLTRANSFERASE_NUDIX HYDROLASE"/>
    <property type="match status" value="1"/>
</dbReference>
<dbReference type="PANTHER" id="PTHR21342">
    <property type="entry name" value="PHOSPHOPANTETHEINE ADENYLYLTRANSFERASE"/>
    <property type="match status" value="1"/>
</dbReference>
<dbReference type="Pfam" id="PF01467">
    <property type="entry name" value="CTP_transf_like"/>
    <property type="match status" value="1"/>
</dbReference>
<dbReference type="SUPFAM" id="SSF52374">
    <property type="entry name" value="Nucleotidylyl transferase"/>
    <property type="match status" value="1"/>
</dbReference>
<comment type="catalytic activity">
    <reaction evidence="1">
        <text>beta-nicotinamide D-ribonucleotide + ATP + H(+) = diphosphate + NAD(+)</text>
        <dbReference type="Rhea" id="RHEA:21360"/>
        <dbReference type="ChEBI" id="CHEBI:14649"/>
        <dbReference type="ChEBI" id="CHEBI:15378"/>
        <dbReference type="ChEBI" id="CHEBI:30616"/>
        <dbReference type="ChEBI" id="CHEBI:33019"/>
        <dbReference type="ChEBI" id="CHEBI:57540"/>
        <dbReference type="EC" id="2.7.7.1"/>
    </reaction>
</comment>
<comment type="pathway">
    <text evidence="1">Cofactor biosynthesis; NAD(+) biosynthesis; NAD(+) from nicotinamide D-ribonucleotide: step 1/1.</text>
</comment>
<comment type="subcellular location">
    <subcellularLocation>
        <location evidence="1">Cytoplasm</location>
    </subcellularLocation>
</comment>
<comment type="similarity">
    <text evidence="1">Belongs to the archaeal NMN adenylyltransferase family.</text>
</comment>
<gene>
    <name type="ordered locus">TK0067</name>
</gene>
<accession>Q5JEF8</accession>
<proteinExistence type="inferred from homology"/>
<keyword id="KW-0067">ATP-binding</keyword>
<keyword id="KW-0963">Cytoplasm</keyword>
<keyword id="KW-0520">NAD</keyword>
<keyword id="KW-0547">Nucleotide-binding</keyword>
<keyword id="KW-0548">Nucleotidyltransferase</keyword>
<keyword id="KW-0662">Pyridine nucleotide biosynthesis</keyword>
<keyword id="KW-1185">Reference proteome</keyword>
<keyword id="KW-0808">Transferase</keyword>
<name>NADM_THEKO</name>
<evidence type="ECO:0000255" key="1">
    <source>
        <dbReference type="HAMAP-Rule" id="MF_00243"/>
    </source>
</evidence>
<organism>
    <name type="scientific">Thermococcus kodakarensis (strain ATCC BAA-918 / JCM 12380 / KOD1)</name>
    <name type="common">Pyrococcus kodakaraensis (strain KOD1)</name>
    <dbReference type="NCBI Taxonomy" id="69014"/>
    <lineage>
        <taxon>Archaea</taxon>
        <taxon>Methanobacteriati</taxon>
        <taxon>Methanobacteriota</taxon>
        <taxon>Thermococci</taxon>
        <taxon>Thermococcales</taxon>
        <taxon>Thermococcaceae</taxon>
        <taxon>Thermococcus</taxon>
    </lineage>
</organism>